<dbReference type="EC" id="6.3.2.9" evidence="1"/>
<dbReference type="EMBL" id="BX842654">
    <property type="protein sequence ID" value="CAE80955.1"/>
    <property type="molecule type" value="Genomic_DNA"/>
</dbReference>
<dbReference type="RefSeq" id="WP_011165559.1">
    <property type="nucleotide sequence ID" value="NC_005363.1"/>
</dbReference>
<dbReference type="SMR" id="Q6MIF8"/>
<dbReference type="STRING" id="264462.Bd3200"/>
<dbReference type="GeneID" id="93014042"/>
<dbReference type="KEGG" id="bba:Bd3200"/>
<dbReference type="eggNOG" id="COG0771">
    <property type="taxonomic scope" value="Bacteria"/>
</dbReference>
<dbReference type="HOGENOM" id="CLU_032540_0_1_7"/>
<dbReference type="UniPathway" id="UPA00219"/>
<dbReference type="Proteomes" id="UP000008080">
    <property type="component" value="Chromosome"/>
</dbReference>
<dbReference type="GO" id="GO:0005737">
    <property type="term" value="C:cytoplasm"/>
    <property type="evidence" value="ECO:0007669"/>
    <property type="project" value="UniProtKB-SubCell"/>
</dbReference>
<dbReference type="GO" id="GO:0005524">
    <property type="term" value="F:ATP binding"/>
    <property type="evidence" value="ECO:0007669"/>
    <property type="project" value="UniProtKB-UniRule"/>
</dbReference>
<dbReference type="GO" id="GO:0008764">
    <property type="term" value="F:UDP-N-acetylmuramoylalanine-D-glutamate ligase activity"/>
    <property type="evidence" value="ECO:0007669"/>
    <property type="project" value="UniProtKB-UniRule"/>
</dbReference>
<dbReference type="GO" id="GO:0051301">
    <property type="term" value="P:cell division"/>
    <property type="evidence" value="ECO:0007669"/>
    <property type="project" value="UniProtKB-KW"/>
</dbReference>
<dbReference type="GO" id="GO:0071555">
    <property type="term" value="P:cell wall organization"/>
    <property type="evidence" value="ECO:0007669"/>
    <property type="project" value="UniProtKB-KW"/>
</dbReference>
<dbReference type="GO" id="GO:0009252">
    <property type="term" value="P:peptidoglycan biosynthetic process"/>
    <property type="evidence" value="ECO:0007669"/>
    <property type="project" value="UniProtKB-UniRule"/>
</dbReference>
<dbReference type="GO" id="GO:0008360">
    <property type="term" value="P:regulation of cell shape"/>
    <property type="evidence" value="ECO:0007669"/>
    <property type="project" value="UniProtKB-KW"/>
</dbReference>
<dbReference type="Gene3D" id="3.90.190.20">
    <property type="entry name" value="Mur ligase, C-terminal domain"/>
    <property type="match status" value="1"/>
</dbReference>
<dbReference type="Gene3D" id="3.40.1190.10">
    <property type="entry name" value="Mur-like, catalytic domain"/>
    <property type="match status" value="1"/>
</dbReference>
<dbReference type="Gene3D" id="3.40.50.720">
    <property type="entry name" value="NAD(P)-binding Rossmann-like Domain"/>
    <property type="match status" value="1"/>
</dbReference>
<dbReference type="HAMAP" id="MF_00639">
    <property type="entry name" value="MurD"/>
    <property type="match status" value="1"/>
</dbReference>
<dbReference type="InterPro" id="IPR039648">
    <property type="entry name" value="DHPH_N"/>
</dbReference>
<dbReference type="InterPro" id="IPR036565">
    <property type="entry name" value="Mur-like_cat_sf"/>
</dbReference>
<dbReference type="InterPro" id="IPR004101">
    <property type="entry name" value="Mur_ligase_C"/>
</dbReference>
<dbReference type="InterPro" id="IPR036615">
    <property type="entry name" value="Mur_ligase_C_dom_sf"/>
</dbReference>
<dbReference type="InterPro" id="IPR013221">
    <property type="entry name" value="Mur_ligase_cen"/>
</dbReference>
<dbReference type="InterPro" id="IPR005762">
    <property type="entry name" value="MurD"/>
</dbReference>
<dbReference type="NCBIfam" id="TIGR01087">
    <property type="entry name" value="murD"/>
    <property type="match status" value="1"/>
</dbReference>
<dbReference type="PANTHER" id="PTHR43692">
    <property type="entry name" value="UDP-N-ACETYLMURAMOYLALANINE--D-GLUTAMATE LIGASE"/>
    <property type="match status" value="1"/>
</dbReference>
<dbReference type="PANTHER" id="PTHR43692:SF1">
    <property type="entry name" value="UDP-N-ACETYLMURAMOYLALANINE--D-GLUTAMATE LIGASE"/>
    <property type="match status" value="1"/>
</dbReference>
<dbReference type="Pfam" id="PF02875">
    <property type="entry name" value="Mur_ligase_C"/>
    <property type="match status" value="1"/>
</dbReference>
<dbReference type="Pfam" id="PF08245">
    <property type="entry name" value="Mur_ligase_M"/>
    <property type="match status" value="1"/>
</dbReference>
<dbReference type="Pfam" id="PF21799">
    <property type="entry name" value="MurD-like_N"/>
    <property type="match status" value="1"/>
</dbReference>
<dbReference type="Pfam" id="PF00070">
    <property type="entry name" value="Pyr_redox"/>
    <property type="match status" value="1"/>
</dbReference>
<dbReference type="SUPFAM" id="SSF51984">
    <property type="entry name" value="MurCD N-terminal domain"/>
    <property type="match status" value="1"/>
</dbReference>
<dbReference type="SUPFAM" id="SSF53623">
    <property type="entry name" value="MurD-like peptide ligases, catalytic domain"/>
    <property type="match status" value="1"/>
</dbReference>
<dbReference type="SUPFAM" id="SSF53244">
    <property type="entry name" value="MurD-like peptide ligases, peptide-binding domain"/>
    <property type="match status" value="1"/>
</dbReference>
<gene>
    <name evidence="1" type="primary">murD</name>
    <name type="ordered locus">Bd3200</name>
</gene>
<proteinExistence type="inferred from homology"/>
<name>MURD_BDEBA</name>
<reference key="1">
    <citation type="journal article" date="2004" name="Science">
        <title>A predator unmasked: life cycle of Bdellovibrio bacteriovorus from a genomic perspective.</title>
        <authorList>
            <person name="Rendulic S."/>
            <person name="Jagtap P."/>
            <person name="Rosinus A."/>
            <person name="Eppinger M."/>
            <person name="Baar C."/>
            <person name="Lanz C."/>
            <person name="Keller H."/>
            <person name="Lambert C."/>
            <person name="Evans K.J."/>
            <person name="Goesmann A."/>
            <person name="Meyer F."/>
            <person name="Sockett R.E."/>
            <person name="Schuster S.C."/>
        </authorList>
    </citation>
    <scope>NUCLEOTIDE SEQUENCE [LARGE SCALE GENOMIC DNA]</scope>
    <source>
        <strain>ATCC 15356 / DSM 50701 / NCIMB 9529 / HD100</strain>
    </source>
</reference>
<sequence length="462" mass="51466">MYKEYSDLKDKRILVVGLGKTGVSLAHFLTKHGAQVTVTDHKSKPELSVQLEQLGELPIKFELGGHSPKTFIAQDLVILSPGVPSNLKIFDYARSQGIKITGEFEFSAGFIKEPIIGLTGTNGKTTVAKITEAILTESGVKTWVGGANEKPLVDYLRLDDKAQVVIAEVSSFMLEHCDTFNPGNIVFTNLAENHLDRYRSMEEYVNAKRRIFKNTNQATTSILNADDNAVVELARDPAVQRGRIFYFSRKPALEPQIMNIGGAVNIGDEIRVRTGPEIESFNIKGMKMRGKHSVENIMAAILASREHGATREAVQKVINTFTGLPHRIEYVRKVGGVMFYNDSKATNVHAVLRALDTFDENVILIAGGKDTNLNYEPLRTSVKRKVKTLILVGEAKERINRDLGDFSETFLIGTFEEAVLIAYQKSRIGDVVLLSPGCSSFDMFDSFEERGDYFKEIVRKFH</sequence>
<protein>
    <recommendedName>
        <fullName evidence="1">UDP-N-acetylmuramoylalanine--D-glutamate ligase</fullName>
        <ecNumber evidence="1">6.3.2.9</ecNumber>
    </recommendedName>
    <alternativeName>
        <fullName evidence="1">D-glutamic acid-adding enzyme</fullName>
    </alternativeName>
    <alternativeName>
        <fullName evidence="1">UDP-N-acetylmuramoyl-L-alanyl-D-glutamate synthetase</fullName>
    </alternativeName>
</protein>
<keyword id="KW-0067">ATP-binding</keyword>
<keyword id="KW-0131">Cell cycle</keyword>
<keyword id="KW-0132">Cell division</keyword>
<keyword id="KW-0133">Cell shape</keyword>
<keyword id="KW-0961">Cell wall biogenesis/degradation</keyword>
<keyword id="KW-0963">Cytoplasm</keyword>
<keyword id="KW-0436">Ligase</keyword>
<keyword id="KW-0547">Nucleotide-binding</keyword>
<keyword id="KW-0573">Peptidoglycan synthesis</keyword>
<keyword id="KW-1185">Reference proteome</keyword>
<organism>
    <name type="scientific">Bdellovibrio bacteriovorus (strain ATCC 15356 / DSM 50701 / NCIMB 9529 / HD100)</name>
    <dbReference type="NCBI Taxonomy" id="264462"/>
    <lineage>
        <taxon>Bacteria</taxon>
        <taxon>Pseudomonadati</taxon>
        <taxon>Bdellovibrionota</taxon>
        <taxon>Bdellovibrionia</taxon>
        <taxon>Bdellovibrionales</taxon>
        <taxon>Pseudobdellovibrionaceae</taxon>
        <taxon>Bdellovibrio</taxon>
    </lineage>
</organism>
<evidence type="ECO:0000255" key="1">
    <source>
        <dbReference type="HAMAP-Rule" id="MF_00639"/>
    </source>
</evidence>
<feature type="chain" id="PRO_0000108973" description="UDP-N-acetylmuramoylalanine--D-glutamate ligase">
    <location>
        <begin position="1"/>
        <end position="462"/>
    </location>
</feature>
<feature type="binding site" evidence="1">
    <location>
        <begin position="120"/>
        <end position="126"/>
    </location>
    <ligand>
        <name>ATP</name>
        <dbReference type="ChEBI" id="CHEBI:30616"/>
    </ligand>
</feature>
<accession>Q6MIF8</accession>
<comment type="function">
    <text evidence="1">Cell wall formation. Catalyzes the addition of glutamate to the nucleotide precursor UDP-N-acetylmuramoyl-L-alanine (UMA).</text>
</comment>
<comment type="catalytic activity">
    <reaction evidence="1">
        <text>UDP-N-acetyl-alpha-D-muramoyl-L-alanine + D-glutamate + ATP = UDP-N-acetyl-alpha-D-muramoyl-L-alanyl-D-glutamate + ADP + phosphate + H(+)</text>
        <dbReference type="Rhea" id="RHEA:16429"/>
        <dbReference type="ChEBI" id="CHEBI:15378"/>
        <dbReference type="ChEBI" id="CHEBI:29986"/>
        <dbReference type="ChEBI" id="CHEBI:30616"/>
        <dbReference type="ChEBI" id="CHEBI:43474"/>
        <dbReference type="ChEBI" id="CHEBI:83898"/>
        <dbReference type="ChEBI" id="CHEBI:83900"/>
        <dbReference type="ChEBI" id="CHEBI:456216"/>
        <dbReference type="EC" id="6.3.2.9"/>
    </reaction>
</comment>
<comment type="pathway">
    <text evidence="1">Cell wall biogenesis; peptidoglycan biosynthesis.</text>
</comment>
<comment type="subcellular location">
    <subcellularLocation>
        <location evidence="1">Cytoplasm</location>
    </subcellularLocation>
</comment>
<comment type="similarity">
    <text evidence="1">Belongs to the MurCDEF family.</text>
</comment>